<evidence type="ECO:0000255" key="1">
    <source>
        <dbReference type="HAMAP-Rule" id="MF_00377"/>
    </source>
</evidence>
<protein>
    <recommendedName>
        <fullName evidence="1">Chromosomal replication initiator protein DnaA</fullName>
    </recommendedName>
</protein>
<proteinExistence type="inferred from homology"/>
<gene>
    <name evidence="1" type="primary">dnaA</name>
    <name type="ordered locus">Rpic_0001</name>
</gene>
<reference key="1">
    <citation type="submission" date="2008-05" db="EMBL/GenBank/DDBJ databases">
        <title>Complete sequence of chromosome 1 of Ralstonia pickettii 12J.</title>
        <authorList>
            <person name="Lucas S."/>
            <person name="Copeland A."/>
            <person name="Lapidus A."/>
            <person name="Glavina del Rio T."/>
            <person name="Dalin E."/>
            <person name="Tice H."/>
            <person name="Bruce D."/>
            <person name="Goodwin L."/>
            <person name="Pitluck S."/>
            <person name="Meincke L."/>
            <person name="Brettin T."/>
            <person name="Detter J.C."/>
            <person name="Han C."/>
            <person name="Kuske C.R."/>
            <person name="Schmutz J."/>
            <person name="Larimer F."/>
            <person name="Land M."/>
            <person name="Hauser L."/>
            <person name="Kyrpides N."/>
            <person name="Mikhailova N."/>
            <person name="Marsh T."/>
            <person name="Richardson P."/>
        </authorList>
    </citation>
    <scope>NUCLEOTIDE SEQUENCE [LARGE SCALE GENOMIC DNA]</scope>
    <source>
        <strain>12J</strain>
    </source>
</reference>
<organism>
    <name type="scientific">Ralstonia pickettii (strain 12J)</name>
    <dbReference type="NCBI Taxonomy" id="402626"/>
    <lineage>
        <taxon>Bacteria</taxon>
        <taxon>Pseudomonadati</taxon>
        <taxon>Pseudomonadota</taxon>
        <taxon>Betaproteobacteria</taxon>
        <taxon>Burkholderiales</taxon>
        <taxon>Burkholderiaceae</taxon>
        <taxon>Ralstonia</taxon>
    </lineage>
</organism>
<comment type="function">
    <text evidence="1">Plays an essential role in the initiation and regulation of chromosomal replication. ATP-DnaA binds to the origin of replication (oriC) to initiate formation of the DNA replication initiation complex once per cell cycle. Binds the DnaA box (a 9 base pair repeat at the origin) and separates the double-stranded (ds)DNA. Forms a right-handed helical filament on oriC DNA; dsDNA binds to the exterior of the filament while single-stranded (ss)DNA is stabiized in the filament's interior. The ATP-DnaA-oriC complex binds and stabilizes one strand of the AT-rich DNA unwinding element (DUE), permitting loading of DNA polymerase. After initiation quickly degrades to an ADP-DnaA complex that is not apt for DNA replication. Binds acidic phospholipids.</text>
</comment>
<comment type="subunit">
    <text evidence="1">Oligomerizes as a right-handed, spiral filament on DNA at oriC.</text>
</comment>
<comment type="subcellular location">
    <subcellularLocation>
        <location evidence="1">Cytoplasm</location>
    </subcellularLocation>
</comment>
<comment type="domain">
    <text evidence="1">Domain I is involved in oligomerization and binding regulators, domain II is flexibile and of varying length in different bacteria, domain III forms the AAA+ region, while domain IV binds dsDNA.</text>
</comment>
<comment type="similarity">
    <text evidence="1">Belongs to the DnaA family.</text>
</comment>
<accession>B2UCF1</accession>
<sequence length="529" mass="59131">MQDFWHAASAQLESELTPQQFKTWIKPLTPLSFDEQACTLRIAAPNRFKLDWVKSQFSGRIQSLACDYWEATVDVQFVLDPSAGQRQAALQPALAPVPMQPLGAQAGQPRQAMPAGNGVSHDAATLRPAPSVYRETALATASHAAADIDVPVMDAAEVSARSYRMPPQAPAVVATLAAPPQAHVDDSVHERSRLNQILTFDNFVTGKANQLARAAAIQVANNPGKSYNPLYLYGGVGLGKTHLIHAIGNFMLMENPRARIRYIHAEQYVSDVVKAYQRKAFDDFKRYYHSLDLLLIDDIQFFSGKNRTQEEFFYAFEALIANRAQVIITSDTYPKEITGIDDRLISRFDSGLTVAIEPPELEMRVAILMKKAQAENVTVPEEVAFFVAKHLRSNVRELEGALRKILAYSNFHGKEITIEVTREALKDLLTVQNRQISVENIQKTCADFYNIKVADMYSKKRPANIARPRQIAMYLAKELTQKSLPEIGELFGGRDHTTVLHAVRKIADERTKDAQLNHELHVLEQTLKG</sequence>
<dbReference type="EMBL" id="CP001068">
    <property type="protein sequence ID" value="ACD25168.1"/>
    <property type="molecule type" value="Genomic_DNA"/>
</dbReference>
<dbReference type="SMR" id="B2UCF1"/>
<dbReference type="STRING" id="402626.Rpic_0001"/>
<dbReference type="KEGG" id="rpi:Rpic_0001"/>
<dbReference type="eggNOG" id="COG0593">
    <property type="taxonomic scope" value="Bacteria"/>
</dbReference>
<dbReference type="HOGENOM" id="CLU_026910_0_1_4"/>
<dbReference type="GO" id="GO:0005737">
    <property type="term" value="C:cytoplasm"/>
    <property type="evidence" value="ECO:0007669"/>
    <property type="project" value="UniProtKB-SubCell"/>
</dbReference>
<dbReference type="GO" id="GO:0005886">
    <property type="term" value="C:plasma membrane"/>
    <property type="evidence" value="ECO:0007669"/>
    <property type="project" value="TreeGrafter"/>
</dbReference>
<dbReference type="GO" id="GO:0005524">
    <property type="term" value="F:ATP binding"/>
    <property type="evidence" value="ECO:0007669"/>
    <property type="project" value="UniProtKB-UniRule"/>
</dbReference>
<dbReference type="GO" id="GO:0016887">
    <property type="term" value="F:ATP hydrolysis activity"/>
    <property type="evidence" value="ECO:0007669"/>
    <property type="project" value="InterPro"/>
</dbReference>
<dbReference type="GO" id="GO:0003688">
    <property type="term" value="F:DNA replication origin binding"/>
    <property type="evidence" value="ECO:0007669"/>
    <property type="project" value="UniProtKB-UniRule"/>
</dbReference>
<dbReference type="GO" id="GO:0008289">
    <property type="term" value="F:lipid binding"/>
    <property type="evidence" value="ECO:0007669"/>
    <property type="project" value="UniProtKB-KW"/>
</dbReference>
<dbReference type="GO" id="GO:0006270">
    <property type="term" value="P:DNA replication initiation"/>
    <property type="evidence" value="ECO:0007669"/>
    <property type="project" value="UniProtKB-UniRule"/>
</dbReference>
<dbReference type="GO" id="GO:0006275">
    <property type="term" value="P:regulation of DNA replication"/>
    <property type="evidence" value="ECO:0007669"/>
    <property type="project" value="UniProtKB-UniRule"/>
</dbReference>
<dbReference type="CDD" id="cd00009">
    <property type="entry name" value="AAA"/>
    <property type="match status" value="1"/>
</dbReference>
<dbReference type="CDD" id="cd06571">
    <property type="entry name" value="Bac_DnaA_C"/>
    <property type="match status" value="1"/>
</dbReference>
<dbReference type="FunFam" id="1.10.8.60:FF:000003">
    <property type="entry name" value="Chromosomal replication initiator protein DnaA"/>
    <property type="match status" value="1"/>
</dbReference>
<dbReference type="FunFam" id="3.40.50.300:FF:000668">
    <property type="entry name" value="Chromosomal replication initiator protein DnaA"/>
    <property type="match status" value="1"/>
</dbReference>
<dbReference type="Gene3D" id="1.10.1750.10">
    <property type="match status" value="1"/>
</dbReference>
<dbReference type="Gene3D" id="1.10.8.60">
    <property type="match status" value="1"/>
</dbReference>
<dbReference type="Gene3D" id="3.30.300.180">
    <property type="match status" value="1"/>
</dbReference>
<dbReference type="Gene3D" id="3.40.50.300">
    <property type="entry name" value="P-loop containing nucleotide triphosphate hydrolases"/>
    <property type="match status" value="1"/>
</dbReference>
<dbReference type="HAMAP" id="MF_00377">
    <property type="entry name" value="DnaA_bact"/>
    <property type="match status" value="1"/>
</dbReference>
<dbReference type="InterPro" id="IPR003593">
    <property type="entry name" value="AAA+_ATPase"/>
</dbReference>
<dbReference type="InterPro" id="IPR001957">
    <property type="entry name" value="Chromosome_initiator_DnaA"/>
</dbReference>
<dbReference type="InterPro" id="IPR020591">
    <property type="entry name" value="Chromosome_initiator_DnaA-like"/>
</dbReference>
<dbReference type="InterPro" id="IPR018312">
    <property type="entry name" value="Chromosome_initiator_DnaA_CS"/>
</dbReference>
<dbReference type="InterPro" id="IPR013159">
    <property type="entry name" value="DnaA_C"/>
</dbReference>
<dbReference type="InterPro" id="IPR013317">
    <property type="entry name" value="DnaA_dom"/>
</dbReference>
<dbReference type="InterPro" id="IPR024633">
    <property type="entry name" value="DnaA_N_dom"/>
</dbReference>
<dbReference type="InterPro" id="IPR038454">
    <property type="entry name" value="DnaA_N_sf"/>
</dbReference>
<dbReference type="InterPro" id="IPR027417">
    <property type="entry name" value="P-loop_NTPase"/>
</dbReference>
<dbReference type="InterPro" id="IPR010921">
    <property type="entry name" value="Trp_repressor/repl_initiator"/>
</dbReference>
<dbReference type="NCBIfam" id="TIGR00362">
    <property type="entry name" value="DnaA"/>
    <property type="match status" value="1"/>
</dbReference>
<dbReference type="PANTHER" id="PTHR30050">
    <property type="entry name" value="CHROMOSOMAL REPLICATION INITIATOR PROTEIN DNAA"/>
    <property type="match status" value="1"/>
</dbReference>
<dbReference type="PANTHER" id="PTHR30050:SF2">
    <property type="entry name" value="CHROMOSOMAL REPLICATION INITIATOR PROTEIN DNAA"/>
    <property type="match status" value="1"/>
</dbReference>
<dbReference type="Pfam" id="PF00308">
    <property type="entry name" value="Bac_DnaA"/>
    <property type="match status" value="1"/>
</dbReference>
<dbReference type="Pfam" id="PF08299">
    <property type="entry name" value="Bac_DnaA_C"/>
    <property type="match status" value="1"/>
</dbReference>
<dbReference type="Pfam" id="PF11638">
    <property type="entry name" value="DnaA_N"/>
    <property type="match status" value="1"/>
</dbReference>
<dbReference type="PRINTS" id="PR00051">
    <property type="entry name" value="DNAA"/>
</dbReference>
<dbReference type="SMART" id="SM00382">
    <property type="entry name" value="AAA"/>
    <property type="match status" value="1"/>
</dbReference>
<dbReference type="SMART" id="SM00760">
    <property type="entry name" value="Bac_DnaA_C"/>
    <property type="match status" value="1"/>
</dbReference>
<dbReference type="SUPFAM" id="SSF52540">
    <property type="entry name" value="P-loop containing nucleoside triphosphate hydrolases"/>
    <property type="match status" value="1"/>
</dbReference>
<dbReference type="SUPFAM" id="SSF48295">
    <property type="entry name" value="TrpR-like"/>
    <property type="match status" value="1"/>
</dbReference>
<dbReference type="PROSITE" id="PS01008">
    <property type="entry name" value="DNAA"/>
    <property type="match status" value="1"/>
</dbReference>
<name>DNAA_RALPJ</name>
<keyword id="KW-0067">ATP-binding</keyword>
<keyword id="KW-0963">Cytoplasm</keyword>
<keyword id="KW-0235">DNA replication</keyword>
<keyword id="KW-0238">DNA-binding</keyword>
<keyword id="KW-0446">Lipid-binding</keyword>
<keyword id="KW-0547">Nucleotide-binding</keyword>
<feature type="chain" id="PRO_1000122006" description="Chromosomal replication initiator protein DnaA">
    <location>
        <begin position="1"/>
        <end position="529"/>
    </location>
</feature>
<feature type="region of interest" description="Domain I, interacts with DnaA modulators" evidence="1">
    <location>
        <begin position="1"/>
        <end position="72"/>
    </location>
</feature>
<feature type="region of interest" description="Domain II" evidence="1">
    <location>
        <begin position="72"/>
        <end position="192"/>
    </location>
</feature>
<feature type="region of interest" description="Domain III, AAA+ region" evidence="1">
    <location>
        <begin position="193"/>
        <end position="409"/>
    </location>
</feature>
<feature type="region of interest" description="Domain IV, binds dsDNA" evidence="1">
    <location>
        <begin position="410"/>
        <end position="529"/>
    </location>
</feature>
<feature type="binding site" evidence="1">
    <location>
        <position position="237"/>
    </location>
    <ligand>
        <name>ATP</name>
        <dbReference type="ChEBI" id="CHEBI:30616"/>
    </ligand>
</feature>
<feature type="binding site" evidence="1">
    <location>
        <position position="239"/>
    </location>
    <ligand>
        <name>ATP</name>
        <dbReference type="ChEBI" id="CHEBI:30616"/>
    </ligand>
</feature>
<feature type="binding site" evidence="1">
    <location>
        <position position="240"/>
    </location>
    <ligand>
        <name>ATP</name>
        <dbReference type="ChEBI" id="CHEBI:30616"/>
    </ligand>
</feature>
<feature type="binding site" evidence="1">
    <location>
        <position position="241"/>
    </location>
    <ligand>
        <name>ATP</name>
        <dbReference type="ChEBI" id="CHEBI:30616"/>
    </ligand>
</feature>